<gene>
    <name evidence="1" type="primary">rplT</name>
    <name type="ordered locus">HH_0445</name>
</gene>
<dbReference type="EMBL" id="AE017125">
    <property type="protein sequence ID" value="AAP77042.1"/>
    <property type="molecule type" value="Genomic_DNA"/>
</dbReference>
<dbReference type="RefSeq" id="WP_011115287.1">
    <property type="nucleotide sequence ID" value="NC_004917.1"/>
</dbReference>
<dbReference type="SMR" id="Q7VJ06"/>
<dbReference type="STRING" id="235279.HH_0445"/>
<dbReference type="KEGG" id="hhe:HH_0445"/>
<dbReference type="eggNOG" id="COG0292">
    <property type="taxonomic scope" value="Bacteria"/>
</dbReference>
<dbReference type="HOGENOM" id="CLU_123265_0_1_7"/>
<dbReference type="OrthoDB" id="9808966at2"/>
<dbReference type="Proteomes" id="UP000002495">
    <property type="component" value="Chromosome"/>
</dbReference>
<dbReference type="GO" id="GO:1990904">
    <property type="term" value="C:ribonucleoprotein complex"/>
    <property type="evidence" value="ECO:0007669"/>
    <property type="project" value="UniProtKB-KW"/>
</dbReference>
<dbReference type="GO" id="GO:0005840">
    <property type="term" value="C:ribosome"/>
    <property type="evidence" value="ECO:0007669"/>
    <property type="project" value="UniProtKB-KW"/>
</dbReference>
<dbReference type="GO" id="GO:0019843">
    <property type="term" value="F:rRNA binding"/>
    <property type="evidence" value="ECO:0007669"/>
    <property type="project" value="UniProtKB-UniRule"/>
</dbReference>
<dbReference type="GO" id="GO:0003735">
    <property type="term" value="F:structural constituent of ribosome"/>
    <property type="evidence" value="ECO:0007669"/>
    <property type="project" value="InterPro"/>
</dbReference>
<dbReference type="GO" id="GO:0000027">
    <property type="term" value="P:ribosomal large subunit assembly"/>
    <property type="evidence" value="ECO:0007669"/>
    <property type="project" value="UniProtKB-UniRule"/>
</dbReference>
<dbReference type="GO" id="GO:0006412">
    <property type="term" value="P:translation"/>
    <property type="evidence" value="ECO:0007669"/>
    <property type="project" value="InterPro"/>
</dbReference>
<dbReference type="CDD" id="cd07026">
    <property type="entry name" value="Ribosomal_L20"/>
    <property type="match status" value="1"/>
</dbReference>
<dbReference type="FunFam" id="1.10.1900.20:FF:000001">
    <property type="entry name" value="50S ribosomal protein L20"/>
    <property type="match status" value="1"/>
</dbReference>
<dbReference type="Gene3D" id="6.10.160.10">
    <property type="match status" value="1"/>
</dbReference>
<dbReference type="Gene3D" id="1.10.1900.20">
    <property type="entry name" value="Ribosomal protein L20"/>
    <property type="match status" value="1"/>
</dbReference>
<dbReference type="HAMAP" id="MF_00382">
    <property type="entry name" value="Ribosomal_bL20"/>
    <property type="match status" value="1"/>
</dbReference>
<dbReference type="InterPro" id="IPR005813">
    <property type="entry name" value="Ribosomal_bL20"/>
</dbReference>
<dbReference type="InterPro" id="IPR049946">
    <property type="entry name" value="RIBOSOMAL_L20_CS"/>
</dbReference>
<dbReference type="InterPro" id="IPR035566">
    <property type="entry name" value="Ribosomal_protein_bL20_C"/>
</dbReference>
<dbReference type="NCBIfam" id="TIGR01032">
    <property type="entry name" value="rplT_bact"/>
    <property type="match status" value="1"/>
</dbReference>
<dbReference type="PANTHER" id="PTHR10986">
    <property type="entry name" value="39S RIBOSOMAL PROTEIN L20"/>
    <property type="match status" value="1"/>
</dbReference>
<dbReference type="Pfam" id="PF00453">
    <property type="entry name" value="Ribosomal_L20"/>
    <property type="match status" value="1"/>
</dbReference>
<dbReference type="PRINTS" id="PR00062">
    <property type="entry name" value="RIBOSOMALL20"/>
</dbReference>
<dbReference type="SUPFAM" id="SSF74731">
    <property type="entry name" value="Ribosomal protein L20"/>
    <property type="match status" value="1"/>
</dbReference>
<dbReference type="PROSITE" id="PS00937">
    <property type="entry name" value="RIBOSOMAL_L20"/>
    <property type="match status" value="1"/>
</dbReference>
<evidence type="ECO:0000255" key="1">
    <source>
        <dbReference type="HAMAP-Rule" id="MF_00382"/>
    </source>
</evidence>
<evidence type="ECO:0000305" key="2"/>
<organism>
    <name type="scientific">Helicobacter hepaticus (strain ATCC 51449 / 3B1)</name>
    <dbReference type="NCBI Taxonomy" id="235279"/>
    <lineage>
        <taxon>Bacteria</taxon>
        <taxon>Pseudomonadati</taxon>
        <taxon>Campylobacterota</taxon>
        <taxon>Epsilonproteobacteria</taxon>
        <taxon>Campylobacterales</taxon>
        <taxon>Helicobacteraceae</taxon>
        <taxon>Helicobacter</taxon>
    </lineage>
</organism>
<protein>
    <recommendedName>
        <fullName evidence="1">Large ribosomal subunit protein bL20</fullName>
    </recommendedName>
    <alternativeName>
        <fullName evidence="2">50S ribosomal protein L20</fullName>
    </alternativeName>
</protein>
<proteinExistence type="inferred from homology"/>
<feature type="chain" id="PRO_0000177166" description="Large ribosomal subunit protein bL20">
    <location>
        <begin position="1"/>
        <end position="117"/>
    </location>
</feature>
<reference key="1">
    <citation type="journal article" date="2003" name="Proc. Natl. Acad. Sci. U.S.A.">
        <title>The complete genome sequence of the carcinogenic bacterium Helicobacter hepaticus.</title>
        <authorList>
            <person name="Suerbaum S."/>
            <person name="Josenhans C."/>
            <person name="Sterzenbach T."/>
            <person name="Drescher B."/>
            <person name="Brandt P."/>
            <person name="Bell M."/>
            <person name="Droege M."/>
            <person name="Fartmann B."/>
            <person name="Fischer H.-P."/>
            <person name="Ge Z."/>
            <person name="Hoerster A."/>
            <person name="Holland R."/>
            <person name="Klein K."/>
            <person name="Koenig J."/>
            <person name="Macko L."/>
            <person name="Mendz G.L."/>
            <person name="Nyakatura G."/>
            <person name="Schauer D.B."/>
            <person name="Shen Z."/>
            <person name="Weber J."/>
            <person name="Frosch M."/>
            <person name="Fox J.G."/>
        </authorList>
    </citation>
    <scope>NUCLEOTIDE SEQUENCE [LARGE SCALE GENOMIC DNA]</scope>
    <source>
        <strain>ATCC 51449 / 3B1</strain>
    </source>
</reference>
<keyword id="KW-1185">Reference proteome</keyword>
<keyword id="KW-0687">Ribonucleoprotein</keyword>
<keyword id="KW-0689">Ribosomal protein</keyword>
<keyword id="KW-0694">RNA-binding</keyword>
<keyword id="KW-0699">rRNA-binding</keyword>
<name>RL20_HELHP</name>
<comment type="function">
    <text evidence="1">Binds directly to 23S ribosomal RNA and is necessary for the in vitro assembly process of the 50S ribosomal subunit. It is not involved in the protein synthesizing functions of that subunit.</text>
</comment>
<comment type="similarity">
    <text evidence="1">Belongs to the bacterial ribosomal protein bL20 family.</text>
</comment>
<accession>Q7VJ06</accession>
<sequence>MRVKTGVVRRRRHKKILKLARGFYSGRRKHFRKAKEQLERSMCYAFRDRKQKKRDFRRLWITRINAACKMNGVSYSRFIHALKLANIELDRKTLADMAMNDINAFNAVLASVKNKLK</sequence>